<proteinExistence type="inferred from homology"/>
<protein>
    <recommendedName>
        <fullName evidence="1">Large ribosomal subunit protein bL12</fullName>
    </recommendedName>
    <alternativeName>
        <fullName evidence="2">50S ribosomal protein L7/L12</fullName>
    </alternativeName>
</protein>
<gene>
    <name evidence="1" type="primary">rplL</name>
    <name type="ordered locus">Clos_0483</name>
</gene>
<reference key="1">
    <citation type="submission" date="2007-10" db="EMBL/GenBank/DDBJ databases">
        <title>Complete genome of Alkaliphilus oremlandii OhILAs.</title>
        <authorList>
            <person name="Copeland A."/>
            <person name="Lucas S."/>
            <person name="Lapidus A."/>
            <person name="Barry K."/>
            <person name="Detter J.C."/>
            <person name="Glavina del Rio T."/>
            <person name="Hammon N."/>
            <person name="Israni S."/>
            <person name="Dalin E."/>
            <person name="Tice H."/>
            <person name="Pitluck S."/>
            <person name="Chain P."/>
            <person name="Malfatti S."/>
            <person name="Shin M."/>
            <person name="Vergez L."/>
            <person name="Schmutz J."/>
            <person name="Larimer F."/>
            <person name="Land M."/>
            <person name="Hauser L."/>
            <person name="Kyrpides N."/>
            <person name="Mikhailova N."/>
            <person name="Stolz J.F."/>
            <person name="Dawson A."/>
            <person name="Fisher E."/>
            <person name="Crable B."/>
            <person name="Perera E."/>
            <person name="Lisak J."/>
            <person name="Ranganathan M."/>
            <person name="Basu P."/>
            <person name="Richardson P."/>
        </authorList>
    </citation>
    <scope>NUCLEOTIDE SEQUENCE [LARGE SCALE GENOMIC DNA]</scope>
    <source>
        <strain>OhILAs</strain>
    </source>
</reference>
<accession>A8MLD1</accession>
<evidence type="ECO:0000255" key="1">
    <source>
        <dbReference type="HAMAP-Rule" id="MF_00368"/>
    </source>
</evidence>
<evidence type="ECO:0000305" key="2"/>
<name>RL7_ALKOO</name>
<comment type="function">
    <text evidence="1">Forms part of the ribosomal stalk which helps the ribosome interact with GTP-bound translation factors. Is thus essential for accurate translation.</text>
</comment>
<comment type="subunit">
    <text evidence="1">Homodimer. Part of the ribosomal stalk of the 50S ribosomal subunit. Forms a multimeric L10(L12)X complex, where L10 forms an elongated spine to which 2 to 4 L12 dimers bind in a sequential fashion. Binds GTP-bound translation factors.</text>
</comment>
<comment type="similarity">
    <text evidence="1">Belongs to the bacterial ribosomal protein bL12 family.</text>
</comment>
<keyword id="KW-1185">Reference proteome</keyword>
<keyword id="KW-0687">Ribonucleoprotein</keyword>
<keyword id="KW-0689">Ribosomal protein</keyword>
<dbReference type="EMBL" id="CP000853">
    <property type="protein sequence ID" value="ABW18045.1"/>
    <property type="molecule type" value="Genomic_DNA"/>
</dbReference>
<dbReference type="RefSeq" id="WP_012158360.1">
    <property type="nucleotide sequence ID" value="NC_009922.1"/>
</dbReference>
<dbReference type="SMR" id="A8MLD1"/>
<dbReference type="STRING" id="350688.Clos_0483"/>
<dbReference type="KEGG" id="aoe:Clos_0483"/>
<dbReference type="eggNOG" id="COG0222">
    <property type="taxonomic scope" value="Bacteria"/>
</dbReference>
<dbReference type="HOGENOM" id="CLU_086499_3_2_9"/>
<dbReference type="OrthoDB" id="9811748at2"/>
<dbReference type="Proteomes" id="UP000000269">
    <property type="component" value="Chromosome"/>
</dbReference>
<dbReference type="GO" id="GO:0022625">
    <property type="term" value="C:cytosolic large ribosomal subunit"/>
    <property type="evidence" value="ECO:0007669"/>
    <property type="project" value="TreeGrafter"/>
</dbReference>
<dbReference type="GO" id="GO:0003729">
    <property type="term" value="F:mRNA binding"/>
    <property type="evidence" value="ECO:0007669"/>
    <property type="project" value="TreeGrafter"/>
</dbReference>
<dbReference type="GO" id="GO:0003735">
    <property type="term" value="F:structural constituent of ribosome"/>
    <property type="evidence" value="ECO:0007669"/>
    <property type="project" value="InterPro"/>
</dbReference>
<dbReference type="GO" id="GO:0006412">
    <property type="term" value="P:translation"/>
    <property type="evidence" value="ECO:0007669"/>
    <property type="project" value="UniProtKB-UniRule"/>
</dbReference>
<dbReference type="CDD" id="cd00387">
    <property type="entry name" value="Ribosomal_L7_L12"/>
    <property type="match status" value="1"/>
</dbReference>
<dbReference type="FunFam" id="3.30.1390.10:FF:000001">
    <property type="entry name" value="50S ribosomal protein L7/L12"/>
    <property type="match status" value="1"/>
</dbReference>
<dbReference type="Gene3D" id="3.30.1390.10">
    <property type="match status" value="1"/>
</dbReference>
<dbReference type="Gene3D" id="1.20.5.710">
    <property type="entry name" value="Single helix bin"/>
    <property type="match status" value="1"/>
</dbReference>
<dbReference type="HAMAP" id="MF_00368">
    <property type="entry name" value="Ribosomal_bL12"/>
    <property type="match status" value="1"/>
</dbReference>
<dbReference type="InterPro" id="IPR000206">
    <property type="entry name" value="Ribosomal_bL12"/>
</dbReference>
<dbReference type="InterPro" id="IPR013823">
    <property type="entry name" value="Ribosomal_bL12_C"/>
</dbReference>
<dbReference type="InterPro" id="IPR014719">
    <property type="entry name" value="Ribosomal_bL12_C/ClpS-like"/>
</dbReference>
<dbReference type="InterPro" id="IPR008932">
    <property type="entry name" value="Ribosomal_bL12_oligo"/>
</dbReference>
<dbReference type="InterPro" id="IPR036235">
    <property type="entry name" value="Ribosomal_bL12_oligo_N_sf"/>
</dbReference>
<dbReference type="NCBIfam" id="TIGR00855">
    <property type="entry name" value="L12"/>
    <property type="match status" value="1"/>
</dbReference>
<dbReference type="PANTHER" id="PTHR45987">
    <property type="entry name" value="39S RIBOSOMAL PROTEIN L12"/>
    <property type="match status" value="1"/>
</dbReference>
<dbReference type="PANTHER" id="PTHR45987:SF4">
    <property type="entry name" value="LARGE RIBOSOMAL SUBUNIT PROTEIN BL12M"/>
    <property type="match status" value="1"/>
</dbReference>
<dbReference type="Pfam" id="PF00542">
    <property type="entry name" value="Ribosomal_L12"/>
    <property type="match status" value="1"/>
</dbReference>
<dbReference type="Pfam" id="PF16320">
    <property type="entry name" value="Ribosomal_L12_N"/>
    <property type="match status" value="1"/>
</dbReference>
<dbReference type="SUPFAM" id="SSF54736">
    <property type="entry name" value="ClpS-like"/>
    <property type="match status" value="1"/>
</dbReference>
<dbReference type="SUPFAM" id="SSF48300">
    <property type="entry name" value="Ribosomal protein L7/12, oligomerisation (N-terminal) domain"/>
    <property type="match status" value="1"/>
</dbReference>
<feature type="chain" id="PRO_1000059920" description="Large ribosomal subunit protein bL12">
    <location>
        <begin position="1"/>
        <end position="121"/>
    </location>
</feature>
<sequence>MTIEQILEAIENMKVLELNELVKAAEEKFGVSASAPVVVGGPVAGAAVEEEQTEFDVVLENAGASKINVIKVVRELTGLGLKEAKEAVDGAPKTLKEGVSKEEAEQIKAKLEEAGAAVTVK</sequence>
<organism>
    <name type="scientific">Alkaliphilus oremlandii (strain OhILAs)</name>
    <name type="common">Clostridium oremlandii (strain OhILAs)</name>
    <dbReference type="NCBI Taxonomy" id="350688"/>
    <lineage>
        <taxon>Bacteria</taxon>
        <taxon>Bacillati</taxon>
        <taxon>Bacillota</taxon>
        <taxon>Clostridia</taxon>
        <taxon>Peptostreptococcales</taxon>
        <taxon>Natronincolaceae</taxon>
        <taxon>Alkaliphilus</taxon>
    </lineage>
</organism>